<feature type="transit peptide" description="Chloroplast" evidence="2">
    <location>
        <begin position="1"/>
        <end position="35"/>
    </location>
</feature>
<feature type="chain" id="PRO_0000013448" description="Histidinol-phosphate aminotransferase, chloroplastic">
    <location>
        <begin position="36"/>
        <end position="413"/>
    </location>
</feature>
<feature type="modified residue" description="N6-(pyridoxal phosphate)lysine" evidence="1">
    <location>
        <position position="273"/>
    </location>
</feature>
<feature type="mutagenesis site" description="In His1-; no histidine biosynthesis.">
    <original>R</original>
    <variation>H</variation>
    <location>
        <position position="381"/>
    </location>
</feature>
<comment type="catalytic activity">
    <reaction>
        <text>L-histidinol phosphate + 2-oxoglutarate = 3-(imidazol-4-yl)-2-oxopropyl phosphate + L-glutamate</text>
        <dbReference type="Rhea" id="RHEA:23744"/>
        <dbReference type="ChEBI" id="CHEBI:16810"/>
        <dbReference type="ChEBI" id="CHEBI:29985"/>
        <dbReference type="ChEBI" id="CHEBI:57766"/>
        <dbReference type="ChEBI" id="CHEBI:57980"/>
        <dbReference type="EC" id="2.6.1.9"/>
    </reaction>
</comment>
<comment type="cofactor">
    <cofactor evidence="1">
        <name>pyridoxal 5'-phosphate</name>
        <dbReference type="ChEBI" id="CHEBI:597326"/>
    </cofactor>
</comment>
<comment type="pathway">
    <text>Amino-acid biosynthesis; L-histidine biosynthesis; L-histidine from 5-phospho-alpha-D-ribose 1-diphosphate: step 7/9.</text>
</comment>
<comment type="subunit">
    <text evidence="1">Homodimer.</text>
</comment>
<comment type="subcellular location">
    <subcellularLocation>
        <location evidence="4">Plastid</location>
        <location evidence="4">Chloroplast</location>
    </subcellularLocation>
</comment>
<comment type="tissue specificity">
    <text evidence="3">Expressed in flowers, leaves, stems and roots.</text>
</comment>
<comment type="similarity">
    <text evidence="4">Belongs to the class-II pyridoxal-phosphate-dependent aminotransferase family. Histidinol-phosphate aminotransferase subfamily.</text>
</comment>
<dbReference type="EC" id="2.6.1.9"/>
<dbReference type="EMBL" id="AJ278767">
    <property type="protein sequence ID" value="CAC20728.1"/>
    <property type="molecule type" value="mRNA"/>
</dbReference>
<dbReference type="SMR" id="Q9FEW2"/>
<dbReference type="UniPathway" id="UPA00031">
    <property type="reaction ID" value="UER00012"/>
</dbReference>
<dbReference type="GO" id="GO:0009507">
    <property type="term" value="C:chloroplast"/>
    <property type="evidence" value="ECO:0007669"/>
    <property type="project" value="UniProtKB-SubCell"/>
</dbReference>
<dbReference type="GO" id="GO:0004400">
    <property type="term" value="F:histidinol-phosphate transaminase activity"/>
    <property type="evidence" value="ECO:0007669"/>
    <property type="project" value="UniProtKB-EC"/>
</dbReference>
<dbReference type="GO" id="GO:0030170">
    <property type="term" value="F:pyridoxal phosphate binding"/>
    <property type="evidence" value="ECO:0007669"/>
    <property type="project" value="InterPro"/>
</dbReference>
<dbReference type="GO" id="GO:0000105">
    <property type="term" value="P:L-histidine biosynthetic process"/>
    <property type="evidence" value="ECO:0007669"/>
    <property type="project" value="UniProtKB-UniPathway"/>
</dbReference>
<dbReference type="CDD" id="cd00609">
    <property type="entry name" value="AAT_like"/>
    <property type="match status" value="1"/>
</dbReference>
<dbReference type="Gene3D" id="3.90.1150.10">
    <property type="entry name" value="Aspartate Aminotransferase, domain 1"/>
    <property type="match status" value="1"/>
</dbReference>
<dbReference type="Gene3D" id="3.40.640.10">
    <property type="entry name" value="Type I PLP-dependent aspartate aminotransferase-like (Major domain)"/>
    <property type="match status" value="1"/>
</dbReference>
<dbReference type="HAMAP" id="MF_01023">
    <property type="entry name" value="HisC_aminotrans_2"/>
    <property type="match status" value="1"/>
</dbReference>
<dbReference type="InterPro" id="IPR004839">
    <property type="entry name" value="Aminotransferase_I/II_large"/>
</dbReference>
<dbReference type="InterPro" id="IPR005861">
    <property type="entry name" value="HisP_aminotrans"/>
</dbReference>
<dbReference type="InterPro" id="IPR015424">
    <property type="entry name" value="PyrdxlP-dep_Trfase"/>
</dbReference>
<dbReference type="InterPro" id="IPR015421">
    <property type="entry name" value="PyrdxlP-dep_Trfase_major"/>
</dbReference>
<dbReference type="InterPro" id="IPR015422">
    <property type="entry name" value="PyrdxlP-dep_Trfase_small"/>
</dbReference>
<dbReference type="NCBIfam" id="TIGR01141">
    <property type="entry name" value="hisC"/>
    <property type="match status" value="1"/>
</dbReference>
<dbReference type="PANTHER" id="PTHR42885:SF2">
    <property type="entry name" value="HISTIDINOL-PHOSPHATE AMINOTRANSFERASE"/>
    <property type="match status" value="1"/>
</dbReference>
<dbReference type="PANTHER" id="PTHR42885">
    <property type="entry name" value="HISTIDINOL-PHOSPHATE AMINOTRANSFERASE-RELATED"/>
    <property type="match status" value="1"/>
</dbReference>
<dbReference type="Pfam" id="PF00155">
    <property type="entry name" value="Aminotran_1_2"/>
    <property type="match status" value="1"/>
</dbReference>
<dbReference type="SUPFAM" id="SSF53383">
    <property type="entry name" value="PLP-dependent transferases"/>
    <property type="match status" value="1"/>
</dbReference>
<name>HIS8_NICPL</name>
<sequence>MGVIELCNTSSICIGRANPSCCSIERNQRRRIICMASSVPVQEESQQKQRVTGDAFIRPHLLKLSPYQPILPFEVLSTRLGRKPEDIVKLDANENPYGPPPEVIEALGAMKFPYIYPDPESRTLRAALAEDSGLESEYILAGCGADELIDLIMRCVLDPGDMIVDCPPTFTMYEFDAAVNGAHVIKVPRNPDFSLDVERIAEVVEHEKPKCIFLTSPNNPDGSIIDDETLLKILDLPILVILDEAYVEFSGMESKMKWVKKHENLIVLRTFSKRAGLAGLRVGYGAFPKSIIEFLWRAKQPYNVSVAAEVAACAALKNPAYLENVKVALVQERERLFNLLKEVPFLDPYPSYSNFILCKVTSGMDAKKLKEDLATMGVMIRHYNSKELKGYVRVSVGKPEHTEALMKCLKHFY</sequence>
<proteinExistence type="evidence at protein level"/>
<keyword id="KW-0028">Amino-acid biosynthesis</keyword>
<keyword id="KW-0032">Aminotransferase</keyword>
<keyword id="KW-0150">Chloroplast</keyword>
<keyword id="KW-0368">Histidine biosynthesis</keyword>
<keyword id="KW-0934">Plastid</keyword>
<keyword id="KW-0663">Pyridoxal phosphate</keyword>
<keyword id="KW-0808">Transferase</keyword>
<keyword id="KW-0809">Transit peptide</keyword>
<reference key="1">
    <citation type="journal article" date="2001" name="Plant Mol. Biol.">
        <title>Molecular characterization and expression study of a histidine auxotrophic mutant (his1-) of Nicotiana plumbaginifolia.</title>
        <authorList>
            <person name="El Malki F."/>
            <person name="Jacobs M."/>
        </authorList>
    </citation>
    <scope>NUCLEOTIDE SEQUENCE [MRNA]</scope>
    <scope>TISSUE SPECIFICITY</scope>
    <scope>MUTANT HIS1-</scope>
    <source>
        <tissue>Leaf</tissue>
    </source>
</reference>
<organism>
    <name type="scientific">Nicotiana plumbaginifolia</name>
    <name type="common">Leadwort-leaved tobacco</name>
    <name type="synonym">Tex-Mex tobacco</name>
    <dbReference type="NCBI Taxonomy" id="4092"/>
    <lineage>
        <taxon>Eukaryota</taxon>
        <taxon>Viridiplantae</taxon>
        <taxon>Streptophyta</taxon>
        <taxon>Embryophyta</taxon>
        <taxon>Tracheophyta</taxon>
        <taxon>Spermatophyta</taxon>
        <taxon>Magnoliopsida</taxon>
        <taxon>eudicotyledons</taxon>
        <taxon>Gunneridae</taxon>
        <taxon>Pentapetalae</taxon>
        <taxon>asterids</taxon>
        <taxon>lamiids</taxon>
        <taxon>Solanales</taxon>
        <taxon>Solanaceae</taxon>
        <taxon>Nicotianoideae</taxon>
        <taxon>Nicotianeae</taxon>
        <taxon>Nicotiana</taxon>
    </lineage>
</organism>
<accession>Q9FEW2</accession>
<gene>
    <name type="primary">HPA</name>
</gene>
<evidence type="ECO:0000250" key="1"/>
<evidence type="ECO:0000255" key="2"/>
<evidence type="ECO:0000269" key="3">
    <source>
    </source>
</evidence>
<evidence type="ECO:0000305" key="4"/>
<protein>
    <recommendedName>
        <fullName>Histidinol-phosphate aminotransferase, chloroplastic</fullName>
        <ecNumber>2.6.1.9</ecNumber>
    </recommendedName>
    <alternativeName>
        <fullName>Imidazole acetol-phosphate transaminase</fullName>
    </alternativeName>
</protein>